<reference key="1">
    <citation type="journal article" date="2004" name="Nat. Biotechnol.">
        <title>The genome sequence of the extreme thermophile Thermus thermophilus.</title>
        <authorList>
            <person name="Henne A."/>
            <person name="Brueggemann H."/>
            <person name="Raasch C."/>
            <person name="Wiezer A."/>
            <person name="Hartsch T."/>
            <person name="Liesegang H."/>
            <person name="Johann A."/>
            <person name="Lienard T."/>
            <person name="Gohl O."/>
            <person name="Martinez-Arias R."/>
            <person name="Jacobi C."/>
            <person name="Starkuviene V."/>
            <person name="Schlenczeck S."/>
            <person name="Dencker S."/>
            <person name="Huber R."/>
            <person name="Klenk H.-P."/>
            <person name="Kramer W."/>
            <person name="Merkl R."/>
            <person name="Gottschalk G."/>
            <person name="Fritz H.-J."/>
        </authorList>
    </citation>
    <scope>NUCLEOTIDE SEQUENCE [LARGE SCALE GENOMIC DNA]</scope>
    <source>
        <strain>ATCC BAA-163 / DSM 7039 / HB27</strain>
    </source>
</reference>
<protein>
    <recommendedName>
        <fullName evidence="1">V-type ATP synthase subunit F</fullName>
    </recommendedName>
    <alternativeName>
        <fullName evidence="1">V-ATPase subunit F</fullName>
    </alternativeName>
</protein>
<dbReference type="EMBL" id="AE017221">
    <property type="protein sequence ID" value="AAS81252.1"/>
    <property type="molecule type" value="Genomic_DNA"/>
</dbReference>
<dbReference type="RefSeq" id="WP_011173335.1">
    <property type="nucleotide sequence ID" value="NC_005835.1"/>
</dbReference>
<dbReference type="SMR" id="Q72J71"/>
<dbReference type="KEGG" id="tth:TT_C0908"/>
<dbReference type="eggNOG" id="COG1436">
    <property type="taxonomic scope" value="Bacteria"/>
</dbReference>
<dbReference type="HOGENOM" id="CLU_135754_2_0_0"/>
<dbReference type="OrthoDB" id="32611at2"/>
<dbReference type="Proteomes" id="UP000000592">
    <property type="component" value="Chromosome"/>
</dbReference>
<dbReference type="GO" id="GO:0005524">
    <property type="term" value="F:ATP binding"/>
    <property type="evidence" value="ECO:0007669"/>
    <property type="project" value="UniProtKB-UniRule"/>
</dbReference>
<dbReference type="GO" id="GO:0046933">
    <property type="term" value="F:proton-transporting ATP synthase activity, rotational mechanism"/>
    <property type="evidence" value="ECO:0007669"/>
    <property type="project" value="UniProtKB-UniRule"/>
</dbReference>
<dbReference type="GO" id="GO:0046961">
    <property type="term" value="F:proton-transporting ATPase activity, rotational mechanism"/>
    <property type="evidence" value="ECO:0007669"/>
    <property type="project" value="InterPro"/>
</dbReference>
<dbReference type="GO" id="GO:0042777">
    <property type="term" value="P:proton motive force-driven plasma membrane ATP synthesis"/>
    <property type="evidence" value="ECO:0007669"/>
    <property type="project" value="UniProtKB-UniRule"/>
</dbReference>
<dbReference type="Gene3D" id="6.10.140.810">
    <property type="match status" value="1"/>
</dbReference>
<dbReference type="Gene3D" id="3.40.50.10580">
    <property type="entry name" value="ATPase, V1 complex, subunit F"/>
    <property type="match status" value="1"/>
</dbReference>
<dbReference type="HAMAP" id="MF_00312">
    <property type="entry name" value="ATP_synth_F_arch"/>
    <property type="match status" value="1"/>
</dbReference>
<dbReference type="InterPro" id="IPR008218">
    <property type="entry name" value="ATPase_V1-cplx_f_g_su"/>
</dbReference>
<dbReference type="InterPro" id="IPR022944">
    <property type="entry name" value="ATPase_V1-cplx_fsu_bac/arc"/>
</dbReference>
<dbReference type="InterPro" id="IPR036906">
    <property type="entry name" value="ATPase_V1_fsu_sf"/>
</dbReference>
<dbReference type="Pfam" id="PF01990">
    <property type="entry name" value="ATP-synt_F"/>
    <property type="match status" value="1"/>
</dbReference>
<dbReference type="SUPFAM" id="SSF159468">
    <property type="entry name" value="AtpF-like"/>
    <property type="match status" value="1"/>
</dbReference>
<comment type="function">
    <text evidence="1">Produces ATP from ADP in the presence of a proton gradient across the membrane.</text>
</comment>
<comment type="similarity">
    <text evidence="1">Belongs to the V-ATPase F subunit family.</text>
</comment>
<feature type="chain" id="PRO_1000059438" description="V-type ATP synthase subunit F">
    <location>
        <begin position="1"/>
        <end position="104"/>
    </location>
</feature>
<sequence length="104" mass="11273">MAVIADPETAQGFRLAGLEGYGASSAEEAQSLLETLVERGGYALVAVDEALLSDPERAVERLMRGRDLPVLLPIAGLKEAFQGHDVEGYMRELVRKTIGFDIKL</sequence>
<accession>Q72J71</accession>
<proteinExistence type="inferred from homology"/>
<keyword id="KW-0066">ATP synthesis</keyword>
<keyword id="KW-0375">Hydrogen ion transport</keyword>
<keyword id="KW-0406">Ion transport</keyword>
<keyword id="KW-0813">Transport</keyword>
<evidence type="ECO:0000255" key="1">
    <source>
        <dbReference type="HAMAP-Rule" id="MF_00312"/>
    </source>
</evidence>
<organism>
    <name type="scientific">Thermus thermophilus (strain ATCC BAA-163 / DSM 7039 / HB27)</name>
    <dbReference type="NCBI Taxonomy" id="262724"/>
    <lineage>
        <taxon>Bacteria</taxon>
        <taxon>Thermotogati</taxon>
        <taxon>Deinococcota</taxon>
        <taxon>Deinococci</taxon>
        <taxon>Thermales</taxon>
        <taxon>Thermaceae</taxon>
        <taxon>Thermus</taxon>
    </lineage>
</organism>
<gene>
    <name evidence="1" type="primary">atpF</name>
    <name type="ordered locus">TT_C0908</name>
</gene>
<name>VATF_THET2</name>